<protein>
    <recommendedName>
        <fullName evidence="1">Lipoyl synthase</fullName>
        <ecNumber evidence="1">2.8.1.8</ecNumber>
    </recommendedName>
    <alternativeName>
        <fullName evidence="1">Lip-syn</fullName>
        <shortName evidence="1">LS</shortName>
    </alternativeName>
    <alternativeName>
        <fullName evidence="1">Lipoate synthase</fullName>
    </alternativeName>
    <alternativeName>
        <fullName evidence="1">Lipoic acid synthase</fullName>
    </alternativeName>
    <alternativeName>
        <fullName evidence="1">Sulfur insertion protein LipA</fullName>
    </alternativeName>
</protein>
<organism>
    <name type="scientific">Rhizobium etli (strain CIAT 652)</name>
    <dbReference type="NCBI Taxonomy" id="491916"/>
    <lineage>
        <taxon>Bacteria</taxon>
        <taxon>Pseudomonadati</taxon>
        <taxon>Pseudomonadota</taxon>
        <taxon>Alphaproteobacteria</taxon>
        <taxon>Hyphomicrobiales</taxon>
        <taxon>Rhizobiaceae</taxon>
        <taxon>Rhizobium/Agrobacterium group</taxon>
        <taxon>Rhizobium</taxon>
    </lineage>
</organism>
<keyword id="KW-0004">4Fe-4S</keyword>
<keyword id="KW-0963">Cytoplasm</keyword>
<keyword id="KW-0408">Iron</keyword>
<keyword id="KW-0411">Iron-sulfur</keyword>
<keyword id="KW-0479">Metal-binding</keyword>
<keyword id="KW-0949">S-adenosyl-L-methionine</keyword>
<keyword id="KW-0808">Transferase</keyword>
<gene>
    <name evidence="1" type="primary">lipA</name>
    <name type="ordered locus">RHECIAT_CH0002038</name>
</gene>
<evidence type="ECO:0000255" key="1">
    <source>
        <dbReference type="HAMAP-Rule" id="MF_00206"/>
    </source>
</evidence>
<evidence type="ECO:0000255" key="2">
    <source>
        <dbReference type="PROSITE-ProRule" id="PRU01266"/>
    </source>
</evidence>
<name>LIPA_RHIE6</name>
<proteinExistence type="inferred from homology"/>
<dbReference type="EC" id="2.8.1.8" evidence="1"/>
<dbReference type="EMBL" id="CP001074">
    <property type="protein sequence ID" value="ACE90999.1"/>
    <property type="molecule type" value="Genomic_DNA"/>
</dbReference>
<dbReference type="SMR" id="B3PYS0"/>
<dbReference type="KEGG" id="rec:RHECIAT_CH0002038"/>
<dbReference type="eggNOG" id="COG0320">
    <property type="taxonomic scope" value="Bacteria"/>
</dbReference>
<dbReference type="HOGENOM" id="CLU_033144_2_1_5"/>
<dbReference type="UniPathway" id="UPA00538">
    <property type="reaction ID" value="UER00593"/>
</dbReference>
<dbReference type="Proteomes" id="UP000008817">
    <property type="component" value="Chromosome"/>
</dbReference>
<dbReference type="GO" id="GO:0005737">
    <property type="term" value="C:cytoplasm"/>
    <property type="evidence" value="ECO:0007669"/>
    <property type="project" value="UniProtKB-SubCell"/>
</dbReference>
<dbReference type="GO" id="GO:0051539">
    <property type="term" value="F:4 iron, 4 sulfur cluster binding"/>
    <property type="evidence" value="ECO:0007669"/>
    <property type="project" value="UniProtKB-UniRule"/>
</dbReference>
<dbReference type="GO" id="GO:0016992">
    <property type="term" value="F:lipoate synthase activity"/>
    <property type="evidence" value="ECO:0007669"/>
    <property type="project" value="UniProtKB-UniRule"/>
</dbReference>
<dbReference type="GO" id="GO:0046872">
    <property type="term" value="F:metal ion binding"/>
    <property type="evidence" value="ECO:0007669"/>
    <property type="project" value="UniProtKB-KW"/>
</dbReference>
<dbReference type="CDD" id="cd01335">
    <property type="entry name" value="Radical_SAM"/>
    <property type="match status" value="1"/>
</dbReference>
<dbReference type="FunFam" id="3.20.20.70:FF:000186">
    <property type="entry name" value="Lipoyl synthase"/>
    <property type="match status" value="1"/>
</dbReference>
<dbReference type="Gene3D" id="3.20.20.70">
    <property type="entry name" value="Aldolase class I"/>
    <property type="match status" value="1"/>
</dbReference>
<dbReference type="HAMAP" id="MF_00206">
    <property type="entry name" value="Lipoyl_synth"/>
    <property type="match status" value="1"/>
</dbReference>
<dbReference type="InterPro" id="IPR013785">
    <property type="entry name" value="Aldolase_TIM"/>
</dbReference>
<dbReference type="InterPro" id="IPR006638">
    <property type="entry name" value="Elp3/MiaA/NifB-like_rSAM"/>
</dbReference>
<dbReference type="InterPro" id="IPR031691">
    <property type="entry name" value="LIAS_N"/>
</dbReference>
<dbReference type="InterPro" id="IPR003698">
    <property type="entry name" value="Lipoyl_synth"/>
</dbReference>
<dbReference type="InterPro" id="IPR007197">
    <property type="entry name" value="rSAM"/>
</dbReference>
<dbReference type="NCBIfam" id="TIGR00510">
    <property type="entry name" value="lipA"/>
    <property type="match status" value="1"/>
</dbReference>
<dbReference type="NCBIfam" id="NF004019">
    <property type="entry name" value="PRK05481.1"/>
    <property type="match status" value="1"/>
</dbReference>
<dbReference type="NCBIfam" id="NF009544">
    <property type="entry name" value="PRK12928.1"/>
    <property type="match status" value="1"/>
</dbReference>
<dbReference type="PANTHER" id="PTHR10949">
    <property type="entry name" value="LIPOYL SYNTHASE"/>
    <property type="match status" value="1"/>
</dbReference>
<dbReference type="PANTHER" id="PTHR10949:SF0">
    <property type="entry name" value="LIPOYL SYNTHASE, MITOCHONDRIAL"/>
    <property type="match status" value="1"/>
</dbReference>
<dbReference type="Pfam" id="PF16881">
    <property type="entry name" value="LIAS_N"/>
    <property type="match status" value="1"/>
</dbReference>
<dbReference type="Pfam" id="PF04055">
    <property type="entry name" value="Radical_SAM"/>
    <property type="match status" value="1"/>
</dbReference>
<dbReference type="PIRSF" id="PIRSF005963">
    <property type="entry name" value="Lipoyl_synth"/>
    <property type="match status" value="1"/>
</dbReference>
<dbReference type="SFLD" id="SFLDF00271">
    <property type="entry name" value="lipoyl_synthase"/>
    <property type="match status" value="1"/>
</dbReference>
<dbReference type="SFLD" id="SFLDG01058">
    <property type="entry name" value="lipoyl_synthase_like"/>
    <property type="match status" value="1"/>
</dbReference>
<dbReference type="SMART" id="SM00729">
    <property type="entry name" value="Elp3"/>
    <property type="match status" value="1"/>
</dbReference>
<dbReference type="SUPFAM" id="SSF102114">
    <property type="entry name" value="Radical SAM enzymes"/>
    <property type="match status" value="1"/>
</dbReference>
<dbReference type="PROSITE" id="PS51918">
    <property type="entry name" value="RADICAL_SAM"/>
    <property type="match status" value="1"/>
</dbReference>
<reference key="1">
    <citation type="journal article" date="2010" name="Appl. Environ. Microbiol.">
        <title>Conserved symbiotic plasmid DNA sequences in the multireplicon pangenomic structure of Rhizobium etli.</title>
        <authorList>
            <person name="Gonzalez V."/>
            <person name="Acosta J.L."/>
            <person name="Santamaria R.I."/>
            <person name="Bustos P."/>
            <person name="Fernandez J.L."/>
            <person name="Hernandez Gonzalez I.L."/>
            <person name="Diaz R."/>
            <person name="Flores M."/>
            <person name="Palacios R."/>
            <person name="Mora J."/>
            <person name="Davila G."/>
        </authorList>
    </citation>
    <scope>NUCLEOTIDE SEQUENCE [LARGE SCALE GENOMIC DNA]</scope>
    <source>
        <strain>CIAT 652</strain>
    </source>
</reference>
<feature type="chain" id="PRO_1000099624" description="Lipoyl synthase">
    <location>
        <begin position="1"/>
        <end position="323"/>
    </location>
</feature>
<feature type="domain" description="Radical SAM core" evidence="2">
    <location>
        <begin position="73"/>
        <end position="289"/>
    </location>
</feature>
<feature type="binding site" evidence="1">
    <location>
        <position position="61"/>
    </location>
    <ligand>
        <name>[4Fe-4S] cluster</name>
        <dbReference type="ChEBI" id="CHEBI:49883"/>
        <label>1</label>
    </ligand>
</feature>
<feature type="binding site" evidence="1">
    <location>
        <position position="66"/>
    </location>
    <ligand>
        <name>[4Fe-4S] cluster</name>
        <dbReference type="ChEBI" id="CHEBI:49883"/>
        <label>1</label>
    </ligand>
</feature>
<feature type="binding site" evidence="1">
    <location>
        <position position="72"/>
    </location>
    <ligand>
        <name>[4Fe-4S] cluster</name>
        <dbReference type="ChEBI" id="CHEBI:49883"/>
        <label>1</label>
    </ligand>
</feature>
<feature type="binding site" evidence="1">
    <location>
        <position position="87"/>
    </location>
    <ligand>
        <name>[4Fe-4S] cluster</name>
        <dbReference type="ChEBI" id="CHEBI:49883"/>
        <label>2</label>
        <note>4Fe-4S-S-AdoMet</note>
    </ligand>
</feature>
<feature type="binding site" evidence="1">
    <location>
        <position position="91"/>
    </location>
    <ligand>
        <name>[4Fe-4S] cluster</name>
        <dbReference type="ChEBI" id="CHEBI:49883"/>
        <label>2</label>
        <note>4Fe-4S-S-AdoMet</note>
    </ligand>
</feature>
<feature type="binding site" evidence="1">
    <location>
        <position position="94"/>
    </location>
    <ligand>
        <name>[4Fe-4S] cluster</name>
        <dbReference type="ChEBI" id="CHEBI:49883"/>
        <label>2</label>
        <note>4Fe-4S-S-AdoMet</note>
    </ligand>
</feature>
<feature type="binding site" evidence="1">
    <location>
        <position position="300"/>
    </location>
    <ligand>
        <name>[4Fe-4S] cluster</name>
        <dbReference type="ChEBI" id="CHEBI:49883"/>
        <label>1</label>
    </ligand>
</feature>
<accession>B3PYS0</accession>
<comment type="function">
    <text evidence="1">Catalyzes the radical-mediated insertion of two sulfur atoms into the C-6 and C-8 positions of the octanoyl moiety bound to the lipoyl domains of lipoate-dependent enzymes, thereby converting the octanoylated domains into lipoylated derivatives.</text>
</comment>
<comment type="catalytic activity">
    <reaction evidence="1">
        <text>[[Fe-S] cluster scaffold protein carrying a second [4Fe-4S](2+) cluster] + N(6)-octanoyl-L-lysyl-[protein] + 2 oxidized [2Fe-2S]-[ferredoxin] + 2 S-adenosyl-L-methionine + 4 H(+) = [[Fe-S] cluster scaffold protein] + N(6)-[(R)-dihydrolipoyl]-L-lysyl-[protein] + 4 Fe(3+) + 2 hydrogen sulfide + 2 5'-deoxyadenosine + 2 L-methionine + 2 reduced [2Fe-2S]-[ferredoxin]</text>
        <dbReference type="Rhea" id="RHEA:16585"/>
        <dbReference type="Rhea" id="RHEA-COMP:9928"/>
        <dbReference type="Rhea" id="RHEA-COMP:10000"/>
        <dbReference type="Rhea" id="RHEA-COMP:10001"/>
        <dbReference type="Rhea" id="RHEA-COMP:10475"/>
        <dbReference type="Rhea" id="RHEA-COMP:14568"/>
        <dbReference type="Rhea" id="RHEA-COMP:14569"/>
        <dbReference type="ChEBI" id="CHEBI:15378"/>
        <dbReference type="ChEBI" id="CHEBI:17319"/>
        <dbReference type="ChEBI" id="CHEBI:29034"/>
        <dbReference type="ChEBI" id="CHEBI:29919"/>
        <dbReference type="ChEBI" id="CHEBI:33722"/>
        <dbReference type="ChEBI" id="CHEBI:33737"/>
        <dbReference type="ChEBI" id="CHEBI:33738"/>
        <dbReference type="ChEBI" id="CHEBI:57844"/>
        <dbReference type="ChEBI" id="CHEBI:59789"/>
        <dbReference type="ChEBI" id="CHEBI:78809"/>
        <dbReference type="ChEBI" id="CHEBI:83100"/>
        <dbReference type="EC" id="2.8.1.8"/>
    </reaction>
</comment>
<comment type="cofactor">
    <cofactor evidence="1">
        <name>[4Fe-4S] cluster</name>
        <dbReference type="ChEBI" id="CHEBI:49883"/>
    </cofactor>
    <text evidence="1">Binds 2 [4Fe-4S] clusters per subunit. One cluster is coordinated with 3 cysteines and an exchangeable S-adenosyl-L-methionine.</text>
</comment>
<comment type="pathway">
    <text evidence="1">Protein modification; protein lipoylation via endogenous pathway; protein N(6)-(lipoyl)lysine from octanoyl-[acyl-carrier-protein]: step 2/2.</text>
</comment>
<comment type="subcellular location">
    <subcellularLocation>
        <location evidence="1">Cytoplasm</location>
    </subcellularLocation>
</comment>
<comment type="similarity">
    <text evidence="1">Belongs to the radical SAM superfamily. Lipoyl synthase family.</text>
</comment>
<sequence length="323" mass="36083">MVTILDTINPDAKRVRHPEKAHRPDTEVMRKPDWIRVKAPTSKGYAETRAIVKEHKLVTVCEEAGCPNIGECWDKKHATFMIMGEICTRACAFCNVATGKPNALDMAEPENVAKAVKEMGLSHVVITSVDRDDLEDGGAEHFEKVIWAIRAASPATTIEILTPDFLKKPGALERVVAAKPDVFNHNMETVAGNYLTVRPGARYFHSIRLLQRVKELDPTMFTKSGIMVGLGEERNEVLQLMDDLRTADVDFLTIGQYLQPTRKHHKVESFVTPDEFKSYETVAYSKGFLMVASSPLTRSSHHAGDDFARLRAAREKKLLVAAE</sequence>